<comment type="subcellular location">
    <subcellularLocation>
        <location evidence="2">Secreted</location>
    </subcellularLocation>
</comment>
<comment type="similarity">
    <text evidence="2">Belongs to the serpin family.</text>
</comment>
<gene>
    <name type="primary">Serpina9</name>
</gene>
<proteinExistence type="evidence at transcript level"/>
<protein>
    <recommendedName>
        <fullName>Serpin A9</fullName>
    </recommendedName>
</protein>
<name>SPA9_MOUSE</name>
<dbReference type="EMBL" id="AK009343">
    <property type="protein sequence ID" value="BAB26230.1"/>
    <property type="molecule type" value="mRNA"/>
</dbReference>
<dbReference type="CCDS" id="CCDS26144.1"/>
<dbReference type="RefSeq" id="NP_001348839.1">
    <property type="nucleotide sequence ID" value="NM_001361910.2"/>
</dbReference>
<dbReference type="RefSeq" id="NP_001348841.1">
    <property type="nucleotide sequence ID" value="NM_001361912.2"/>
</dbReference>
<dbReference type="RefSeq" id="NP_082273.1">
    <property type="nucleotide sequence ID" value="NM_027997.4"/>
</dbReference>
<dbReference type="RefSeq" id="XP_006516304.1">
    <property type="nucleotide sequence ID" value="XM_006516241.1"/>
</dbReference>
<dbReference type="RefSeq" id="XP_006516305.1">
    <property type="nucleotide sequence ID" value="XM_006516242.2"/>
</dbReference>
<dbReference type="SMR" id="Q9D7D2"/>
<dbReference type="FunCoup" id="Q9D7D2">
    <property type="interactions" value="213"/>
</dbReference>
<dbReference type="STRING" id="10090.ENSMUSP00000058535"/>
<dbReference type="GlyCosmos" id="Q9D7D2">
    <property type="glycosylation" value="3 sites, No reported glycans"/>
</dbReference>
<dbReference type="GlyGen" id="Q9D7D2">
    <property type="glycosylation" value="3 sites"/>
</dbReference>
<dbReference type="iPTMnet" id="Q9D7D2"/>
<dbReference type="PhosphoSitePlus" id="Q9D7D2"/>
<dbReference type="PaxDb" id="10090-ENSMUSP00000058535"/>
<dbReference type="ProteomicsDB" id="263309"/>
<dbReference type="Antibodypedia" id="56037">
    <property type="antibodies" value="152 antibodies from 25 providers"/>
</dbReference>
<dbReference type="DNASU" id="71907"/>
<dbReference type="Ensembl" id="ENSMUST00000058464.5">
    <property type="protein sequence ID" value="ENSMUSP00000058535.5"/>
    <property type="gene ID" value="ENSMUSG00000058260.3"/>
</dbReference>
<dbReference type="GeneID" id="71907"/>
<dbReference type="KEGG" id="mmu:71907"/>
<dbReference type="UCSC" id="uc007owo.1">
    <property type="organism name" value="mouse"/>
</dbReference>
<dbReference type="AGR" id="MGI:1919157"/>
<dbReference type="CTD" id="327657"/>
<dbReference type="MGI" id="MGI:1919157">
    <property type="gene designation" value="Serpina9"/>
</dbReference>
<dbReference type="VEuPathDB" id="HostDB:ENSMUSG00000058260"/>
<dbReference type="eggNOG" id="KOG2392">
    <property type="taxonomic scope" value="Eukaryota"/>
</dbReference>
<dbReference type="GeneTree" id="ENSGT00940000162880"/>
<dbReference type="HOGENOM" id="CLU_023330_2_1_1"/>
<dbReference type="InParanoid" id="Q9D7D2"/>
<dbReference type="OMA" id="FNPADTH"/>
<dbReference type="OrthoDB" id="671595at2759"/>
<dbReference type="PhylomeDB" id="Q9D7D2"/>
<dbReference type="TreeFam" id="TF343201"/>
<dbReference type="BioGRID-ORCS" id="71907">
    <property type="hits" value="5 hits in 78 CRISPR screens"/>
</dbReference>
<dbReference type="PRO" id="PR:Q9D7D2"/>
<dbReference type="Proteomes" id="UP000000589">
    <property type="component" value="Chromosome 12"/>
</dbReference>
<dbReference type="RNAct" id="Q9D7D2">
    <property type="molecule type" value="protein"/>
</dbReference>
<dbReference type="Bgee" id="ENSMUSG00000058260">
    <property type="expression patterns" value="Expressed in striatum and 22 other cell types or tissues"/>
</dbReference>
<dbReference type="ExpressionAtlas" id="Q9D7D2">
    <property type="expression patterns" value="baseline and differential"/>
</dbReference>
<dbReference type="GO" id="GO:0005615">
    <property type="term" value="C:extracellular space"/>
    <property type="evidence" value="ECO:0007669"/>
    <property type="project" value="InterPro"/>
</dbReference>
<dbReference type="GO" id="GO:0004867">
    <property type="term" value="F:serine-type endopeptidase inhibitor activity"/>
    <property type="evidence" value="ECO:0000250"/>
    <property type="project" value="UniProtKB"/>
</dbReference>
<dbReference type="CDD" id="cd19556">
    <property type="entry name" value="serpinA9_centerin"/>
    <property type="match status" value="1"/>
</dbReference>
<dbReference type="FunFam" id="2.30.39.10:FF:000003">
    <property type="entry name" value="alpha-1-antitrypsin isoform X1"/>
    <property type="match status" value="1"/>
</dbReference>
<dbReference type="FunFam" id="3.30.497.10:FF:000001">
    <property type="entry name" value="Serine protease inhibitor"/>
    <property type="match status" value="1"/>
</dbReference>
<dbReference type="Gene3D" id="2.30.39.10">
    <property type="entry name" value="Alpha-1-antitrypsin, domain 1"/>
    <property type="match status" value="1"/>
</dbReference>
<dbReference type="Gene3D" id="3.30.497.10">
    <property type="entry name" value="Antithrombin, subunit I, domain 2"/>
    <property type="match status" value="1"/>
</dbReference>
<dbReference type="Gene3D" id="2.10.310.10">
    <property type="entry name" value="Serpins superfamily"/>
    <property type="match status" value="1"/>
</dbReference>
<dbReference type="InterPro" id="IPR023796">
    <property type="entry name" value="Serpin_dom"/>
</dbReference>
<dbReference type="InterPro" id="IPR000215">
    <property type="entry name" value="Serpin_fam"/>
</dbReference>
<dbReference type="InterPro" id="IPR036186">
    <property type="entry name" value="Serpin_sf"/>
</dbReference>
<dbReference type="InterPro" id="IPR042178">
    <property type="entry name" value="Serpin_sf_1"/>
</dbReference>
<dbReference type="InterPro" id="IPR042185">
    <property type="entry name" value="Serpin_sf_2"/>
</dbReference>
<dbReference type="PANTHER" id="PTHR11461">
    <property type="entry name" value="SERINE PROTEASE INHIBITOR, SERPIN"/>
    <property type="match status" value="1"/>
</dbReference>
<dbReference type="PANTHER" id="PTHR11461:SF40">
    <property type="entry name" value="SERPIN A9"/>
    <property type="match status" value="1"/>
</dbReference>
<dbReference type="Pfam" id="PF00079">
    <property type="entry name" value="Serpin"/>
    <property type="match status" value="1"/>
</dbReference>
<dbReference type="SMART" id="SM00093">
    <property type="entry name" value="SERPIN"/>
    <property type="match status" value="1"/>
</dbReference>
<dbReference type="SUPFAM" id="SSF56574">
    <property type="entry name" value="Serpins"/>
    <property type="match status" value="1"/>
</dbReference>
<keyword id="KW-0325">Glycoprotein</keyword>
<keyword id="KW-0646">Protease inhibitor</keyword>
<keyword id="KW-1185">Reference proteome</keyword>
<keyword id="KW-0964">Secreted</keyword>
<keyword id="KW-0722">Serine protease inhibitor</keyword>
<keyword id="KW-0732">Signal</keyword>
<reference key="1">
    <citation type="journal article" date="2005" name="Science">
        <title>The transcriptional landscape of the mammalian genome.</title>
        <authorList>
            <person name="Carninci P."/>
            <person name="Kasukawa T."/>
            <person name="Katayama S."/>
            <person name="Gough J."/>
            <person name="Frith M.C."/>
            <person name="Maeda N."/>
            <person name="Oyama R."/>
            <person name="Ravasi T."/>
            <person name="Lenhard B."/>
            <person name="Wells C."/>
            <person name="Kodzius R."/>
            <person name="Shimokawa K."/>
            <person name="Bajic V.B."/>
            <person name="Brenner S.E."/>
            <person name="Batalov S."/>
            <person name="Forrest A.R."/>
            <person name="Zavolan M."/>
            <person name="Davis M.J."/>
            <person name="Wilming L.G."/>
            <person name="Aidinis V."/>
            <person name="Allen J.E."/>
            <person name="Ambesi-Impiombato A."/>
            <person name="Apweiler R."/>
            <person name="Aturaliya R.N."/>
            <person name="Bailey T.L."/>
            <person name="Bansal M."/>
            <person name="Baxter L."/>
            <person name="Beisel K.W."/>
            <person name="Bersano T."/>
            <person name="Bono H."/>
            <person name="Chalk A.M."/>
            <person name="Chiu K.P."/>
            <person name="Choudhary V."/>
            <person name="Christoffels A."/>
            <person name="Clutterbuck D.R."/>
            <person name="Crowe M.L."/>
            <person name="Dalla E."/>
            <person name="Dalrymple B.P."/>
            <person name="de Bono B."/>
            <person name="Della Gatta G."/>
            <person name="di Bernardo D."/>
            <person name="Down T."/>
            <person name="Engstrom P."/>
            <person name="Fagiolini M."/>
            <person name="Faulkner G."/>
            <person name="Fletcher C.F."/>
            <person name="Fukushima T."/>
            <person name="Furuno M."/>
            <person name="Futaki S."/>
            <person name="Gariboldi M."/>
            <person name="Georgii-Hemming P."/>
            <person name="Gingeras T.R."/>
            <person name="Gojobori T."/>
            <person name="Green R.E."/>
            <person name="Gustincich S."/>
            <person name="Harbers M."/>
            <person name="Hayashi Y."/>
            <person name="Hensch T.K."/>
            <person name="Hirokawa N."/>
            <person name="Hill D."/>
            <person name="Huminiecki L."/>
            <person name="Iacono M."/>
            <person name="Ikeo K."/>
            <person name="Iwama A."/>
            <person name="Ishikawa T."/>
            <person name="Jakt M."/>
            <person name="Kanapin A."/>
            <person name="Katoh M."/>
            <person name="Kawasawa Y."/>
            <person name="Kelso J."/>
            <person name="Kitamura H."/>
            <person name="Kitano H."/>
            <person name="Kollias G."/>
            <person name="Krishnan S.P."/>
            <person name="Kruger A."/>
            <person name="Kummerfeld S.K."/>
            <person name="Kurochkin I.V."/>
            <person name="Lareau L.F."/>
            <person name="Lazarevic D."/>
            <person name="Lipovich L."/>
            <person name="Liu J."/>
            <person name="Liuni S."/>
            <person name="McWilliam S."/>
            <person name="Madan Babu M."/>
            <person name="Madera M."/>
            <person name="Marchionni L."/>
            <person name="Matsuda H."/>
            <person name="Matsuzawa S."/>
            <person name="Miki H."/>
            <person name="Mignone F."/>
            <person name="Miyake S."/>
            <person name="Morris K."/>
            <person name="Mottagui-Tabar S."/>
            <person name="Mulder N."/>
            <person name="Nakano N."/>
            <person name="Nakauchi H."/>
            <person name="Ng P."/>
            <person name="Nilsson R."/>
            <person name="Nishiguchi S."/>
            <person name="Nishikawa S."/>
            <person name="Nori F."/>
            <person name="Ohara O."/>
            <person name="Okazaki Y."/>
            <person name="Orlando V."/>
            <person name="Pang K.C."/>
            <person name="Pavan W.J."/>
            <person name="Pavesi G."/>
            <person name="Pesole G."/>
            <person name="Petrovsky N."/>
            <person name="Piazza S."/>
            <person name="Reed J."/>
            <person name="Reid J.F."/>
            <person name="Ring B.Z."/>
            <person name="Ringwald M."/>
            <person name="Rost B."/>
            <person name="Ruan Y."/>
            <person name="Salzberg S.L."/>
            <person name="Sandelin A."/>
            <person name="Schneider C."/>
            <person name="Schoenbach C."/>
            <person name="Sekiguchi K."/>
            <person name="Semple C.A."/>
            <person name="Seno S."/>
            <person name="Sessa L."/>
            <person name="Sheng Y."/>
            <person name="Shibata Y."/>
            <person name="Shimada H."/>
            <person name="Shimada K."/>
            <person name="Silva D."/>
            <person name="Sinclair B."/>
            <person name="Sperling S."/>
            <person name="Stupka E."/>
            <person name="Sugiura K."/>
            <person name="Sultana R."/>
            <person name="Takenaka Y."/>
            <person name="Taki K."/>
            <person name="Tammoja K."/>
            <person name="Tan S.L."/>
            <person name="Tang S."/>
            <person name="Taylor M.S."/>
            <person name="Tegner J."/>
            <person name="Teichmann S.A."/>
            <person name="Ueda H.R."/>
            <person name="van Nimwegen E."/>
            <person name="Verardo R."/>
            <person name="Wei C.L."/>
            <person name="Yagi K."/>
            <person name="Yamanishi H."/>
            <person name="Zabarovsky E."/>
            <person name="Zhu S."/>
            <person name="Zimmer A."/>
            <person name="Hide W."/>
            <person name="Bult C."/>
            <person name="Grimmond S.M."/>
            <person name="Teasdale R.D."/>
            <person name="Liu E.T."/>
            <person name="Brusic V."/>
            <person name="Quackenbush J."/>
            <person name="Wahlestedt C."/>
            <person name="Mattick J.S."/>
            <person name="Hume D.A."/>
            <person name="Kai C."/>
            <person name="Sasaki D."/>
            <person name="Tomaru Y."/>
            <person name="Fukuda S."/>
            <person name="Kanamori-Katayama M."/>
            <person name="Suzuki M."/>
            <person name="Aoki J."/>
            <person name="Arakawa T."/>
            <person name="Iida J."/>
            <person name="Imamura K."/>
            <person name="Itoh M."/>
            <person name="Kato T."/>
            <person name="Kawaji H."/>
            <person name="Kawagashira N."/>
            <person name="Kawashima T."/>
            <person name="Kojima M."/>
            <person name="Kondo S."/>
            <person name="Konno H."/>
            <person name="Nakano K."/>
            <person name="Ninomiya N."/>
            <person name="Nishio T."/>
            <person name="Okada M."/>
            <person name="Plessy C."/>
            <person name="Shibata K."/>
            <person name="Shiraki T."/>
            <person name="Suzuki S."/>
            <person name="Tagami M."/>
            <person name="Waki K."/>
            <person name="Watahiki A."/>
            <person name="Okamura-Oho Y."/>
            <person name="Suzuki H."/>
            <person name="Kawai J."/>
            <person name="Hayashizaki Y."/>
        </authorList>
    </citation>
    <scope>NUCLEOTIDE SEQUENCE [LARGE SCALE MRNA]</scope>
    <source>
        <strain>C57BL/6J</strain>
        <tissue>Tongue</tissue>
    </source>
</reference>
<accession>Q9D7D2</accession>
<organism>
    <name type="scientific">Mus musculus</name>
    <name type="common">Mouse</name>
    <dbReference type="NCBI Taxonomy" id="10090"/>
    <lineage>
        <taxon>Eukaryota</taxon>
        <taxon>Metazoa</taxon>
        <taxon>Chordata</taxon>
        <taxon>Craniata</taxon>
        <taxon>Vertebrata</taxon>
        <taxon>Euteleostomi</taxon>
        <taxon>Mammalia</taxon>
        <taxon>Eutheria</taxon>
        <taxon>Euarchontoglires</taxon>
        <taxon>Glires</taxon>
        <taxon>Rodentia</taxon>
        <taxon>Myomorpha</taxon>
        <taxon>Muroidea</taxon>
        <taxon>Muridae</taxon>
        <taxon>Murinae</taxon>
        <taxon>Mus</taxon>
        <taxon>Mus</taxon>
    </lineage>
</organism>
<sequence>MGSSSFYRVLLLVGFCAPIFCMLSSNPYNQESSHLPSMKKNPASQVSPSNTRFSFLLYQRLAQENPGQNILFSPVSISTSLAMLSLGARSATKTQILRTLGFNFTWVSEPTIHMGFEYLVRSLNKCHQGRELRMGSVLFIRKELQLQATFLDRVKKLYGAKVFSEDFSNAATAQAQINSYVEKETKGKVVDVIQDLDSQTAMVLVNHIFFKANWTQPFSTANTNKSFPFLLSKGTTVHVPMMHQTESFAFGVDKELGCSILQMDYRGDAVAFFVLPGKGKMRQLEKSLSARRLRKWSRSLQKRWIKVFIPKFSISASYNLETILPKMGIRDAFNSNADFSGITKTHFLQVSKAAHKAVLDVSEEGTEAAAATTTKLIVRSRDTPSSIIAFKEPFLILLLDKNTESVLFLGKVENPRKM</sequence>
<evidence type="ECO:0000255" key="1"/>
<evidence type="ECO:0000305" key="2"/>
<feature type="signal peptide" evidence="1">
    <location>
        <begin position="1"/>
        <end position="25"/>
    </location>
</feature>
<feature type="chain" id="PRO_0000041972" description="Serpin A9">
    <location>
        <begin position="26"/>
        <end position="418"/>
    </location>
</feature>
<feature type="glycosylation site" description="N-linked (GlcNAc...) asparagine" evidence="1">
    <location>
        <position position="103"/>
    </location>
</feature>
<feature type="glycosylation site" description="N-linked (GlcNAc...) asparagine" evidence="1">
    <location>
        <position position="213"/>
    </location>
</feature>
<feature type="glycosylation site" description="N-linked (GlcNAc...) asparagine" evidence="1">
    <location>
        <position position="224"/>
    </location>
</feature>